<proteinExistence type="evidence at protein level"/>
<comment type="function">
    <text evidence="3 4">2-oxoglutarate-dependent dioxygenase required for hydroxylation in position C-7 of the benzoxazinoids. Can use 2,4-dihydroxy-2H-1,4-benzoxazin-3(4H)-one 2-D-glucoside (DIBOA-glucoside) as substrate, but not aglucone DIBOA.</text>
</comment>
<comment type="catalytic activity">
    <reaction evidence="4">
        <text>DIBOA beta-D-glucoside + 2-oxoglutarate + O2 = TRIBOA beta-D-glucoside + succinate + CO2</text>
        <dbReference type="Rhea" id="RHEA:32115"/>
        <dbReference type="ChEBI" id="CHEBI:15379"/>
        <dbReference type="ChEBI" id="CHEBI:16526"/>
        <dbReference type="ChEBI" id="CHEBI:16810"/>
        <dbReference type="ChEBI" id="CHEBI:30031"/>
        <dbReference type="ChEBI" id="CHEBI:63670"/>
        <dbReference type="ChEBI" id="CHEBI:63671"/>
        <dbReference type="EC" id="1.14.11.59"/>
    </reaction>
</comment>
<comment type="cofactor">
    <cofactor evidence="4">
        <name>L-ascorbate</name>
        <dbReference type="ChEBI" id="CHEBI:38290"/>
    </cofactor>
</comment>
<comment type="cofactor">
    <cofactor evidence="2">
        <name>Fe(2+)</name>
        <dbReference type="ChEBI" id="CHEBI:29033"/>
    </cofactor>
    <text evidence="2">Binds 1 Fe(2+) ion per subunit.</text>
</comment>
<comment type="biophysicochemical properties">
    <kinetics>
        <KM evidence="4">373 uM for 2,4-dihydroxy-2H-1,4-benzoxazin-3(4H)-one 2-D-glucoside (DIBOA-glucoside)</KM>
        <KM evidence="4">70 uM for 2-oxoglutarate</KM>
        <Vmax evidence="4">59.0 umol/sec/g enzyme with DIBOA-glucoside as substrate</Vmax>
        <text>kcat is 2.1 sec(-1) for DIBOA-glucoside.</text>
    </kinetics>
    <phDependence>
        <text evidence="4">Optimum pH is 6.0.</text>
    </phDependence>
</comment>
<comment type="subcellular location">
    <subcellularLocation>
        <location evidence="4">Cytoplasm</location>
    </subcellularLocation>
</comment>
<comment type="tissue specificity">
    <text evidence="4">Expressed in seedlings and newly formed crown roots. Highest expression in the scutellar node. Low to non detectable levels in cob, tassel and mature organs like husk or leaves.</text>
</comment>
<comment type="developmental stage">
    <text evidence="4">Peak of expression in 3- and 4-day-old seedlings.</text>
</comment>
<comment type="disruption phenotype">
    <text evidence="3">Loss of DIMBOA biosynthesis.</text>
</comment>
<comment type="similarity">
    <text evidence="5">Belongs to the iron/ascorbate-dependent oxidoreductase family.</text>
</comment>
<sequence length="374" mass="41369">MAPTTATKDDSGYGDERRRELQAFDDTKLGVKGLVDSGVKSIPSIFHHPPEALSDIISPAPLPSSPPSGAAIPVVDLSVTRREDLVEQVRHAAGTVGFFWLVNHGVAEELMGGMLRGVRQFNEGPVEAKQALYSRDLARNLRFASNFDLFKAAAADWRDTLFCEVAPNPPPREELPEPLRNVMLEYGAAVTKLARFVFELLSESLGMPSDHLYEMECMQNLNVVCQYYPPCPEPHRTVGVKRHTDPGFFTILLQDGMGGLQVRLGNNGQSGGCWVDIAPRPGALMVNIGDLLQLVTNDRFRSVEHRVPANKSSDTARVSVASFFNTDVRRSERMYGPIPDPSKPPLYRSVRARDFIAKFNTIGLDGRALDHFRL</sequence>
<feature type="chain" id="PRO_0000415304" description="DIBOA-glucoside dioxygenase BX6">
    <location>
        <begin position="1"/>
        <end position="374"/>
    </location>
</feature>
<feature type="domain" description="Fe2OG dioxygenase" evidence="2">
    <location>
        <begin position="214"/>
        <end position="326"/>
    </location>
</feature>
<feature type="binding site" evidence="1">
    <location>
        <position position="228"/>
    </location>
    <ligand>
        <name>2-oxoglutarate</name>
        <dbReference type="ChEBI" id="CHEBI:16810"/>
    </ligand>
</feature>
<feature type="binding site" evidence="2">
    <location>
        <position position="243"/>
    </location>
    <ligand>
        <name>Fe cation</name>
        <dbReference type="ChEBI" id="CHEBI:24875"/>
    </ligand>
</feature>
<feature type="binding site" evidence="2">
    <location>
        <position position="245"/>
    </location>
    <ligand>
        <name>Fe cation</name>
        <dbReference type="ChEBI" id="CHEBI:24875"/>
    </ligand>
</feature>
<feature type="binding site" evidence="2">
    <location>
        <position position="305"/>
    </location>
    <ligand>
        <name>Fe cation</name>
        <dbReference type="ChEBI" id="CHEBI:24875"/>
    </ligand>
</feature>
<feature type="binding site" evidence="2">
    <location>
        <position position="317"/>
    </location>
    <ligand>
        <name>2-oxoglutarate</name>
        <dbReference type="ChEBI" id="CHEBI:16810"/>
    </ligand>
</feature>
<feature type="binding site" evidence="1">
    <location>
        <position position="319"/>
    </location>
    <ligand>
        <name>2-oxoglutarate</name>
        <dbReference type="ChEBI" id="CHEBI:16810"/>
    </ligand>
</feature>
<gene>
    <name type="primary">BX6</name>
</gene>
<name>BX6_MAIZE</name>
<evidence type="ECO:0000250" key="1">
    <source>
        <dbReference type="UniProtKB" id="D4N500"/>
    </source>
</evidence>
<evidence type="ECO:0000255" key="2">
    <source>
        <dbReference type="PROSITE-ProRule" id="PRU00805"/>
    </source>
</evidence>
<evidence type="ECO:0000269" key="3">
    <source>
    </source>
</evidence>
<evidence type="ECO:0000269" key="4">
    <source>
    </source>
</evidence>
<evidence type="ECO:0000305" key="5"/>
<organism>
    <name type="scientific">Zea mays</name>
    <name type="common">Maize</name>
    <dbReference type="NCBI Taxonomy" id="4577"/>
    <lineage>
        <taxon>Eukaryota</taxon>
        <taxon>Viridiplantae</taxon>
        <taxon>Streptophyta</taxon>
        <taxon>Embryophyta</taxon>
        <taxon>Tracheophyta</taxon>
        <taxon>Spermatophyta</taxon>
        <taxon>Magnoliopsida</taxon>
        <taxon>Liliopsida</taxon>
        <taxon>Poales</taxon>
        <taxon>Poaceae</taxon>
        <taxon>PACMAD clade</taxon>
        <taxon>Panicoideae</taxon>
        <taxon>Andropogonodae</taxon>
        <taxon>Andropogoneae</taxon>
        <taxon>Tripsacinae</taxon>
        <taxon>Zea</taxon>
    </lineage>
</organism>
<keyword id="KW-0963">Cytoplasm</keyword>
<keyword id="KW-0223">Dioxygenase</keyword>
<keyword id="KW-0408">Iron</keyword>
<keyword id="KW-0479">Metal-binding</keyword>
<keyword id="KW-0560">Oxidoreductase</keyword>
<keyword id="KW-1185">Reference proteome</keyword>
<protein>
    <recommendedName>
        <fullName>DIBOA-glucoside dioxygenase BX6</fullName>
        <ecNumber evidence="4">1.14.11.59</ecNumber>
    </recommendedName>
    <alternativeName>
        <fullName>2,4-dihydroxy-1,4-benzoxazin-3-one-glucoside dioxygenase</fullName>
    </alternativeName>
    <alternativeName>
        <fullName>2-oxoglutarate-dependent dioxygenase BX6</fullName>
    </alternativeName>
    <alternativeName>
        <fullName>Protein BENZOXAZINONE SYNTHESIS 6</fullName>
    </alternativeName>
</protein>
<reference key="1">
    <citation type="journal article" date="2003" name="Phytochemistry">
        <title>A 2-oxoglutarate-dependent dioxygenase is integrated in DIMBOA-biosynthesis.</title>
        <authorList>
            <person name="Frey M."/>
            <person name="Huber K."/>
            <person name="Park W.J."/>
            <person name="Sicker D."/>
            <person name="Lindberg P."/>
            <person name="Meeley R.B."/>
            <person name="Simmons C.R."/>
            <person name="Yalpani N."/>
            <person name="Gierl A."/>
        </authorList>
    </citation>
    <scope>NUCLEOTIDE SEQUENCE [MRNA]</scope>
    <scope>FUNCTION</scope>
    <scope>DISRUPTION PHENOTYPE</scope>
    <source>
        <strain>cv. CI31A</strain>
    </source>
</reference>
<reference key="2">
    <citation type="submission" date="2008-07" db="EMBL/GenBank/DDBJ databases">
        <title>Maize full-length cDNA project.</title>
        <authorList>
            <person name="Yu Y."/>
            <person name="Currie J."/>
            <person name="Lomeli R."/>
            <person name="Angelova A."/>
            <person name="Collura K."/>
            <person name="Wissotski M."/>
            <person name="Campos D."/>
            <person name="Kudrna D."/>
            <person name="Golser W."/>
            <person name="Ashely E."/>
            <person name="Haller K."/>
            <person name="Descour A."/>
            <person name="Fernandes J."/>
            <person name="Zuccolo A."/>
            <person name="Soderlund C."/>
            <person name="Walbot V."/>
        </authorList>
    </citation>
    <scope>NUCLEOTIDE SEQUENCE [LARGE SCALE MRNA]</scope>
    <source>
        <strain>cv. B73</strain>
    </source>
</reference>
<reference key="3">
    <citation type="journal article" date="2009" name="Plant Mol. Biol.">
        <title>Insights into corn genes derived from large-scale cDNA sequencing.</title>
        <authorList>
            <person name="Alexandrov N.N."/>
            <person name="Brover V.V."/>
            <person name="Freidin S."/>
            <person name="Troukhan M.E."/>
            <person name="Tatarinova T.V."/>
            <person name="Zhang H."/>
            <person name="Swaller T.J."/>
            <person name="Lu Y.-P."/>
            <person name="Bouck J."/>
            <person name="Flavell R.B."/>
            <person name="Feldmann K.A."/>
        </authorList>
    </citation>
    <scope>NUCLEOTIDE SEQUENCE [LARGE SCALE MRNA]</scope>
</reference>
<reference key="4">
    <citation type="journal article" date="2008" name="Plant Physiol.">
        <title>Elucidation of the Final Reactions of DIMBOA-Glucoside Biosynthesis in Maize: Characterization of Bx6 and Bx7.</title>
        <authorList>
            <person name="Jonczyk R."/>
            <person name="Schmidt H."/>
            <person name="Osterrieder A."/>
            <person name="Fiesselmann A."/>
            <person name="Schullehner K."/>
            <person name="Haslbeck M."/>
            <person name="Sicker D."/>
            <person name="Hofmann D."/>
            <person name="Yalpani N."/>
            <person name="Simmons C."/>
            <person name="Frey M."/>
            <person name="Gierl A."/>
        </authorList>
    </citation>
    <scope>FUNCTION</scope>
    <scope>CATALYTIC ACTIVITY</scope>
    <scope>COFACTOR</scope>
    <scope>BIOPHYSICOCHEMICAL PROPERTIES</scope>
    <scope>SUBCELLULAR LOCATION</scope>
    <scope>DEVELOPMENTAL STAGE</scope>
    <scope>TISSUE SPECIFICITY</scope>
    <source>
        <strain>cv. CI31A</strain>
    </source>
</reference>
<accession>Q84TC2</accession>
<dbReference type="EC" id="1.14.11.59" evidence="4"/>
<dbReference type="EMBL" id="AF540907">
    <property type="protein sequence ID" value="AAO65850.1"/>
    <property type="molecule type" value="mRNA"/>
</dbReference>
<dbReference type="EMBL" id="BT040894">
    <property type="protein sequence ID" value="ACF85899.1"/>
    <property type="molecule type" value="mRNA"/>
</dbReference>
<dbReference type="EMBL" id="EU960746">
    <property type="protein sequence ID" value="ACG32864.1"/>
    <property type="molecule type" value="mRNA"/>
</dbReference>
<dbReference type="RefSeq" id="NP_001105100.1">
    <property type="nucleotide sequence ID" value="NM_001111630.1"/>
</dbReference>
<dbReference type="SMR" id="Q84TC2"/>
<dbReference type="STRING" id="4577.Q84TC2"/>
<dbReference type="PaxDb" id="4577-GRMZM6G617209_P01"/>
<dbReference type="EnsemblPlants" id="Zm00001eb164860_T001">
    <property type="protein sequence ID" value="Zm00001eb164860_P001"/>
    <property type="gene ID" value="Zm00001eb164860"/>
</dbReference>
<dbReference type="EnsemblPlants" id="Zm00001eb164860_T002">
    <property type="protein sequence ID" value="Zm00001eb164860_P002"/>
    <property type="gene ID" value="Zm00001eb164860"/>
</dbReference>
<dbReference type="GeneID" id="541977"/>
<dbReference type="Gramene" id="Zm00001eb164860_T001">
    <property type="protein sequence ID" value="Zm00001eb164860_P001"/>
    <property type="gene ID" value="Zm00001eb164860"/>
</dbReference>
<dbReference type="Gramene" id="Zm00001eb164860_T002">
    <property type="protein sequence ID" value="Zm00001eb164860_P002"/>
    <property type="gene ID" value="Zm00001eb164860"/>
</dbReference>
<dbReference type="KEGG" id="zma:541977"/>
<dbReference type="MaizeGDB" id="1204247"/>
<dbReference type="eggNOG" id="KOG0143">
    <property type="taxonomic scope" value="Eukaryota"/>
</dbReference>
<dbReference type="HOGENOM" id="CLU_010119_0_0_1"/>
<dbReference type="InParanoid" id="Q84TC2"/>
<dbReference type="OMA" id="MENPRVY"/>
<dbReference type="OrthoDB" id="288590at2759"/>
<dbReference type="BioCyc" id="MetaCyc:MONOMER-10142"/>
<dbReference type="SABIO-RK" id="Q84TC2"/>
<dbReference type="Proteomes" id="UP000007305">
    <property type="component" value="Chromosome 4"/>
</dbReference>
<dbReference type="ExpressionAtlas" id="Q84TC2">
    <property type="expression patterns" value="baseline and differential"/>
</dbReference>
<dbReference type="GO" id="GO:0005737">
    <property type="term" value="C:cytoplasm"/>
    <property type="evidence" value="ECO:0007669"/>
    <property type="project" value="UniProtKB-SubCell"/>
</dbReference>
<dbReference type="GO" id="GO:0016706">
    <property type="term" value="F:2-oxoglutarate-dependent dioxygenase activity"/>
    <property type="evidence" value="ECO:0000314"/>
    <property type="project" value="CACAO"/>
</dbReference>
<dbReference type="GO" id="GO:0102717">
    <property type="term" value="F:DIBOA-glucoside oxygenase activity"/>
    <property type="evidence" value="ECO:0007669"/>
    <property type="project" value="UniProtKB-EC"/>
</dbReference>
<dbReference type="GO" id="GO:0046872">
    <property type="term" value="F:metal ion binding"/>
    <property type="evidence" value="ECO:0007669"/>
    <property type="project" value="UniProtKB-KW"/>
</dbReference>
<dbReference type="FunFam" id="2.60.120.330:FF:000026">
    <property type="entry name" value="DIBOA-glucoside dioxygenase BX6"/>
    <property type="match status" value="1"/>
</dbReference>
<dbReference type="Gene3D" id="2.60.120.330">
    <property type="entry name" value="B-lactam Antibiotic, Isopenicillin N Synthase, Chain"/>
    <property type="match status" value="1"/>
</dbReference>
<dbReference type="InterPro" id="IPR026992">
    <property type="entry name" value="DIOX_N"/>
</dbReference>
<dbReference type="InterPro" id="IPR044861">
    <property type="entry name" value="IPNS-like_FE2OG_OXY"/>
</dbReference>
<dbReference type="InterPro" id="IPR027443">
    <property type="entry name" value="IPNS-like_sf"/>
</dbReference>
<dbReference type="InterPro" id="IPR005123">
    <property type="entry name" value="Oxoglu/Fe-dep_dioxygenase_dom"/>
</dbReference>
<dbReference type="PANTHER" id="PTHR10209:SF145">
    <property type="entry name" value="DIBOA-GLUCOSIDE DIOXYGENASE BX6"/>
    <property type="match status" value="1"/>
</dbReference>
<dbReference type="PANTHER" id="PTHR10209">
    <property type="entry name" value="OXIDOREDUCTASE, 2OG-FE II OXYGENASE FAMILY PROTEIN"/>
    <property type="match status" value="1"/>
</dbReference>
<dbReference type="Pfam" id="PF03171">
    <property type="entry name" value="2OG-FeII_Oxy"/>
    <property type="match status" value="1"/>
</dbReference>
<dbReference type="Pfam" id="PF14226">
    <property type="entry name" value="DIOX_N"/>
    <property type="match status" value="1"/>
</dbReference>
<dbReference type="SUPFAM" id="SSF51197">
    <property type="entry name" value="Clavaminate synthase-like"/>
    <property type="match status" value="1"/>
</dbReference>
<dbReference type="PROSITE" id="PS51471">
    <property type="entry name" value="FE2OG_OXY"/>
    <property type="match status" value="1"/>
</dbReference>